<comment type="function">
    <text evidence="1">Catalyzes the attachment of proline to tRNA(Pro) in a two-step reaction: proline is first activated by ATP to form Pro-AMP and then transferred to the acceptor end of tRNA(Pro). As ProRS can inadvertently accommodate and process non-cognate amino acids such as alanine and cysteine, to avoid such errors it has two additional distinct editing activities against alanine. One activity is designated as 'pretransfer' editing and involves the tRNA(Pro)-independent hydrolysis of activated Ala-AMP. The other activity is designated 'posttransfer' editing and involves deacylation of mischarged Ala-tRNA(Pro). The misacylated Cys-tRNA(Pro) is not edited by ProRS.</text>
</comment>
<comment type="catalytic activity">
    <reaction evidence="1">
        <text>tRNA(Pro) + L-proline + ATP = L-prolyl-tRNA(Pro) + AMP + diphosphate</text>
        <dbReference type="Rhea" id="RHEA:14305"/>
        <dbReference type="Rhea" id="RHEA-COMP:9700"/>
        <dbReference type="Rhea" id="RHEA-COMP:9702"/>
        <dbReference type="ChEBI" id="CHEBI:30616"/>
        <dbReference type="ChEBI" id="CHEBI:33019"/>
        <dbReference type="ChEBI" id="CHEBI:60039"/>
        <dbReference type="ChEBI" id="CHEBI:78442"/>
        <dbReference type="ChEBI" id="CHEBI:78532"/>
        <dbReference type="ChEBI" id="CHEBI:456215"/>
        <dbReference type="EC" id="6.1.1.15"/>
    </reaction>
</comment>
<comment type="subunit">
    <text evidence="1">Homodimer.</text>
</comment>
<comment type="subcellular location">
    <subcellularLocation>
        <location evidence="1">Cytoplasm</location>
    </subcellularLocation>
</comment>
<comment type="domain">
    <text evidence="1">Consists of three domains: the N-terminal catalytic domain, the editing domain and the C-terminal anticodon-binding domain.</text>
</comment>
<comment type="similarity">
    <text evidence="1">Belongs to the class-II aminoacyl-tRNA synthetase family. ProS type 1 subfamily.</text>
</comment>
<feature type="chain" id="PRO_1000069127" description="Proline--tRNA ligase">
    <location>
        <begin position="1"/>
        <end position="578"/>
    </location>
</feature>
<sequence length="578" mass="63840">MKASRFFIGTLKEAPADAEIVSHKLMVRAGMIRRVAGGIYNYLPIGLRSIRKVEAIVREEMNRAGALELLMPAVQPAELWQESGRWEQYGPELLRFKDRKDNDFVIGPTHEEVITDIARNQIKSYRQMPVNFYQIQTKFRDEIRPRFGVMRGREFLMKDAYSFDKDAAGLNESYRKMYDAYVRIFTRLGLEFRAVAADSGSIGGNFSHEFHVIADTGEDAIAYCPTSEFAANIEAAEALPLIAERAAPAQAMEKVATPGKAKCEAVAELLAIPLERTIKSIVLATDNEGAEPTIWLVMLRGDHDLNEIKVSKLPGLKNHRFATEQEIVEWFGTPPGYLGPVGTKKPVKVIADRTVANMSDFVVGANEVDYHIAGVNWGRDLPEPDVADVRNVKKGDPSPDGKGVIDICRGIEVGHVFQLGTKYSEAMGATFLDESGKPQPMLMGCYGVGVTRILGAAIEQNFDDKGIIWPESIAPFELVLCPMGYDRSEMVREAADKLYAELTAAGVDVILDDRGERPGVMFADWELIGVPHRLVIGERGLKDGKVEYQGRRDAEATLLPADAAAATVTEKIRAALAH</sequence>
<accession>A4JBC2</accession>
<proteinExistence type="inferred from homology"/>
<reference key="1">
    <citation type="submission" date="2007-03" db="EMBL/GenBank/DDBJ databases">
        <title>Complete sequence of chromosome 1 of Burkholderia vietnamiensis G4.</title>
        <authorList>
            <consortium name="US DOE Joint Genome Institute"/>
            <person name="Copeland A."/>
            <person name="Lucas S."/>
            <person name="Lapidus A."/>
            <person name="Barry K."/>
            <person name="Detter J.C."/>
            <person name="Glavina del Rio T."/>
            <person name="Hammon N."/>
            <person name="Israni S."/>
            <person name="Dalin E."/>
            <person name="Tice H."/>
            <person name="Pitluck S."/>
            <person name="Chain P."/>
            <person name="Malfatti S."/>
            <person name="Shin M."/>
            <person name="Vergez L."/>
            <person name="Schmutz J."/>
            <person name="Larimer F."/>
            <person name="Land M."/>
            <person name="Hauser L."/>
            <person name="Kyrpides N."/>
            <person name="Tiedje J."/>
            <person name="Richardson P."/>
        </authorList>
    </citation>
    <scope>NUCLEOTIDE SEQUENCE [LARGE SCALE GENOMIC DNA]</scope>
    <source>
        <strain>G4 / LMG 22486</strain>
    </source>
</reference>
<name>SYP_BURVG</name>
<protein>
    <recommendedName>
        <fullName evidence="1">Proline--tRNA ligase</fullName>
        <ecNumber evidence="1">6.1.1.15</ecNumber>
    </recommendedName>
    <alternativeName>
        <fullName evidence="1">Prolyl-tRNA synthetase</fullName>
        <shortName evidence="1">ProRS</shortName>
    </alternativeName>
</protein>
<organism>
    <name type="scientific">Burkholderia vietnamiensis (strain G4 / LMG 22486)</name>
    <name type="common">Burkholderia cepacia (strain R1808)</name>
    <dbReference type="NCBI Taxonomy" id="269482"/>
    <lineage>
        <taxon>Bacteria</taxon>
        <taxon>Pseudomonadati</taxon>
        <taxon>Pseudomonadota</taxon>
        <taxon>Betaproteobacteria</taxon>
        <taxon>Burkholderiales</taxon>
        <taxon>Burkholderiaceae</taxon>
        <taxon>Burkholderia</taxon>
        <taxon>Burkholderia cepacia complex</taxon>
    </lineage>
</organism>
<dbReference type="EC" id="6.1.1.15" evidence="1"/>
<dbReference type="EMBL" id="CP000614">
    <property type="protein sequence ID" value="ABO53575.1"/>
    <property type="molecule type" value="Genomic_DNA"/>
</dbReference>
<dbReference type="SMR" id="A4JBC2"/>
<dbReference type="KEGG" id="bvi:Bcep1808_0563"/>
<dbReference type="eggNOG" id="COG0442">
    <property type="taxonomic scope" value="Bacteria"/>
</dbReference>
<dbReference type="HOGENOM" id="CLU_016739_0_0_4"/>
<dbReference type="Proteomes" id="UP000002287">
    <property type="component" value="Chromosome 1"/>
</dbReference>
<dbReference type="GO" id="GO:0005829">
    <property type="term" value="C:cytosol"/>
    <property type="evidence" value="ECO:0007669"/>
    <property type="project" value="TreeGrafter"/>
</dbReference>
<dbReference type="GO" id="GO:0002161">
    <property type="term" value="F:aminoacyl-tRNA deacylase activity"/>
    <property type="evidence" value="ECO:0007669"/>
    <property type="project" value="InterPro"/>
</dbReference>
<dbReference type="GO" id="GO:0005524">
    <property type="term" value="F:ATP binding"/>
    <property type="evidence" value="ECO:0007669"/>
    <property type="project" value="UniProtKB-UniRule"/>
</dbReference>
<dbReference type="GO" id="GO:0004827">
    <property type="term" value="F:proline-tRNA ligase activity"/>
    <property type="evidence" value="ECO:0007669"/>
    <property type="project" value="UniProtKB-UniRule"/>
</dbReference>
<dbReference type="GO" id="GO:0006433">
    <property type="term" value="P:prolyl-tRNA aminoacylation"/>
    <property type="evidence" value="ECO:0007669"/>
    <property type="project" value="UniProtKB-UniRule"/>
</dbReference>
<dbReference type="CDD" id="cd04334">
    <property type="entry name" value="ProRS-INS"/>
    <property type="match status" value="1"/>
</dbReference>
<dbReference type="CDD" id="cd00861">
    <property type="entry name" value="ProRS_anticodon_short"/>
    <property type="match status" value="1"/>
</dbReference>
<dbReference type="CDD" id="cd00779">
    <property type="entry name" value="ProRS_core_prok"/>
    <property type="match status" value="1"/>
</dbReference>
<dbReference type="FunFam" id="3.30.930.10:FF:000043">
    <property type="entry name" value="Proline--tRNA ligase"/>
    <property type="match status" value="1"/>
</dbReference>
<dbReference type="FunFam" id="3.30.930.10:FF:000097">
    <property type="entry name" value="Proline--tRNA ligase"/>
    <property type="match status" value="1"/>
</dbReference>
<dbReference type="Gene3D" id="3.40.50.800">
    <property type="entry name" value="Anticodon-binding domain"/>
    <property type="match status" value="1"/>
</dbReference>
<dbReference type="Gene3D" id="3.30.930.10">
    <property type="entry name" value="Bira Bifunctional Protein, Domain 2"/>
    <property type="match status" value="2"/>
</dbReference>
<dbReference type="Gene3D" id="3.90.960.10">
    <property type="entry name" value="YbaK/aminoacyl-tRNA synthetase-associated domain"/>
    <property type="match status" value="1"/>
</dbReference>
<dbReference type="HAMAP" id="MF_01569">
    <property type="entry name" value="Pro_tRNA_synth_type1"/>
    <property type="match status" value="1"/>
</dbReference>
<dbReference type="InterPro" id="IPR002314">
    <property type="entry name" value="aa-tRNA-synt_IIb"/>
</dbReference>
<dbReference type="InterPro" id="IPR006195">
    <property type="entry name" value="aa-tRNA-synth_II"/>
</dbReference>
<dbReference type="InterPro" id="IPR045864">
    <property type="entry name" value="aa-tRNA-synth_II/BPL/LPL"/>
</dbReference>
<dbReference type="InterPro" id="IPR004154">
    <property type="entry name" value="Anticodon-bd"/>
</dbReference>
<dbReference type="InterPro" id="IPR036621">
    <property type="entry name" value="Anticodon-bd_dom_sf"/>
</dbReference>
<dbReference type="InterPro" id="IPR002316">
    <property type="entry name" value="Pro-tRNA-ligase_IIa"/>
</dbReference>
<dbReference type="InterPro" id="IPR004500">
    <property type="entry name" value="Pro-tRNA-synth_IIa_bac-type"/>
</dbReference>
<dbReference type="InterPro" id="IPR023717">
    <property type="entry name" value="Pro-tRNA-Synthase_IIa_type1"/>
</dbReference>
<dbReference type="InterPro" id="IPR050062">
    <property type="entry name" value="Pro-tRNA_synthetase"/>
</dbReference>
<dbReference type="InterPro" id="IPR044140">
    <property type="entry name" value="ProRS_anticodon_short"/>
</dbReference>
<dbReference type="InterPro" id="IPR033730">
    <property type="entry name" value="ProRS_core_prok"/>
</dbReference>
<dbReference type="InterPro" id="IPR036754">
    <property type="entry name" value="YbaK/aa-tRNA-synt-asso_dom_sf"/>
</dbReference>
<dbReference type="InterPro" id="IPR007214">
    <property type="entry name" value="YbaK/aa-tRNA-synth-assoc-dom"/>
</dbReference>
<dbReference type="NCBIfam" id="NF006625">
    <property type="entry name" value="PRK09194.1"/>
    <property type="match status" value="1"/>
</dbReference>
<dbReference type="NCBIfam" id="TIGR00409">
    <property type="entry name" value="proS_fam_II"/>
    <property type="match status" value="1"/>
</dbReference>
<dbReference type="PANTHER" id="PTHR42753">
    <property type="entry name" value="MITOCHONDRIAL RIBOSOME PROTEIN L39/PROLYL-TRNA LIGASE FAMILY MEMBER"/>
    <property type="match status" value="1"/>
</dbReference>
<dbReference type="PANTHER" id="PTHR42753:SF2">
    <property type="entry name" value="PROLINE--TRNA LIGASE"/>
    <property type="match status" value="1"/>
</dbReference>
<dbReference type="Pfam" id="PF03129">
    <property type="entry name" value="HGTP_anticodon"/>
    <property type="match status" value="1"/>
</dbReference>
<dbReference type="Pfam" id="PF00587">
    <property type="entry name" value="tRNA-synt_2b"/>
    <property type="match status" value="1"/>
</dbReference>
<dbReference type="Pfam" id="PF04073">
    <property type="entry name" value="tRNA_edit"/>
    <property type="match status" value="1"/>
</dbReference>
<dbReference type="PIRSF" id="PIRSF001535">
    <property type="entry name" value="ProRS_1"/>
    <property type="match status" value="1"/>
</dbReference>
<dbReference type="PRINTS" id="PR01046">
    <property type="entry name" value="TRNASYNTHPRO"/>
</dbReference>
<dbReference type="SUPFAM" id="SSF52954">
    <property type="entry name" value="Class II aaRS ABD-related"/>
    <property type="match status" value="1"/>
</dbReference>
<dbReference type="SUPFAM" id="SSF55681">
    <property type="entry name" value="Class II aaRS and biotin synthetases"/>
    <property type="match status" value="1"/>
</dbReference>
<dbReference type="SUPFAM" id="SSF55826">
    <property type="entry name" value="YbaK/ProRS associated domain"/>
    <property type="match status" value="1"/>
</dbReference>
<dbReference type="PROSITE" id="PS50862">
    <property type="entry name" value="AA_TRNA_LIGASE_II"/>
    <property type="match status" value="1"/>
</dbReference>
<gene>
    <name evidence="1" type="primary">proS</name>
    <name type="ordered locus">Bcep1808_0563</name>
</gene>
<keyword id="KW-0030">Aminoacyl-tRNA synthetase</keyword>
<keyword id="KW-0067">ATP-binding</keyword>
<keyword id="KW-0963">Cytoplasm</keyword>
<keyword id="KW-0436">Ligase</keyword>
<keyword id="KW-0547">Nucleotide-binding</keyword>
<keyword id="KW-0648">Protein biosynthesis</keyword>
<evidence type="ECO:0000255" key="1">
    <source>
        <dbReference type="HAMAP-Rule" id="MF_01569"/>
    </source>
</evidence>